<reference key="1">
    <citation type="journal article" date="1998" name="Science">
        <title>Genome sequence of the nematode C. elegans: a platform for investigating biology.</title>
        <authorList>
            <consortium name="The C. elegans sequencing consortium"/>
        </authorList>
    </citation>
    <scope>NUCLEOTIDE SEQUENCE [LARGE SCALE GENOMIC DNA]</scope>
    <source>
        <strain>Bristol N2</strain>
    </source>
</reference>
<proteinExistence type="inferred from homology"/>
<dbReference type="EMBL" id="FO080200">
    <property type="protein sequence ID" value="CCD61920.1"/>
    <property type="molecule type" value="Genomic_DNA"/>
</dbReference>
<dbReference type="PIR" id="G89606">
    <property type="entry name" value="G89606"/>
</dbReference>
<dbReference type="RefSeq" id="NP_509568.1">
    <property type="nucleotide sequence ID" value="NM_077167.8"/>
</dbReference>
<dbReference type="SMR" id="Q11070"/>
<dbReference type="FunCoup" id="Q11070">
    <property type="interactions" value="1522"/>
</dbReference>
<dbReference type="PaxDb" id="6239-B0416.2"/>
<dbReference type="EnsemblMetazoa" id="B0416.2.1">
    <property type="protein sequence ID" value="B0416.2.1"/>
    <property type="gene ID" value="WBGene00015178"/>
</dbReference>
<dbReference type="GeneID" id="181984"/>
<dbReference type="KEGG" id="cel:CELE_B0416.2"/>
<dbReference type="UCSC" id="B0416.2">
    <property type="organism name" value="c. elegans"/>
</dbReference>
<dbReference type="AGR" id="WB:WBGene00015178"/>
<dbReference type="CTD" id="181984"/>
<dbReference type="WormBase" id="B0416.2">
    <property type="protein sequence ID" value="CE02432"/>
    <property type="gene ID" value="WBGene00015178"/>
</dbReference>
<dbReference type="eggNOG" id="ENOG502TI1Y">
    <property type="taxonomic scope" value="Eukaryota"/>
</dbReference>
<dbReference type="GeneTree" id="ENSGT00970000196755"/>
<dbReference type="HOGENOM" id="CLU_134604_0_0_1"/>
<dbReference type="InParanoid" id="Q11070"/>
<dbReference type="OMA" id="RVPIFCE"/>
<dbReference type="OrthoDB" id="6381819at2759"/>
<dbReference type="PRO" id="PR:Q11070"/>
<dbReference type="Proteomes" id="UP000001940">
    <property type="component" value="Chromosome X"/>
</dbReference>
<dbReference type="Bgee" id="WBGene00015178">
    <property type="expression patterns" value="Expressed in adult organism and 1 other cell type or tissue"/>
</dbReference>
<dbReference type="Gene3D" id="2.10.90.10">
    <property type="entry name" value="Cystine-knot cytokines"/>
    <property type="match status" value="1"/>
</dbReference>
<dbReference type="InterPro" id="IPR029034">
    <property type="entry name" value="Cystine-knot_cytokine"/>
</dbReference>
<dbReference type="SUPFAM" id="SSF57501">
    <property type="entry name" value="Cystine-knot cytokines"/>
    <property type="match status" value="1"/>
</dbReference>
<evidence type="ECO:0000255" key="1"/>
<gene>
    <name type="ORF">B0416.2</name>
</gene>
<protein>
    <recommendedName>
        <fullName>Uncharacterized protein B0416.2</fullName>
    </recommendedName>
</protein>
<feature type="signal peptide" evidence="1">
    <location>
        <begin position="1"/>
        <end position="25"/>
    </location>
</feature>
<feature type="chain" id="PRO_0000014273" description="Uncharacterized protein B0416.2">
    <location>
        <begin position="26"/>
        <end position="167"/>
    </location>
</feature>
<organism>
    <name type="scientific">Caenorhabditis elegans</name>
    <dbReference type="NCBI Taxonomy" id="6239"/>
    <lineage>
        <taxon>Eukaryota</taxon>
        <taxon>Metazoa</taxon>
        <taxon>Ecdysozoa</taxon>
        <taxon>Nematoda</taxon>
        <taxon>Chromadorea</taxon>
        <taxon>Rhabditida</taxon>
        <taxon>Rhabditina</taxon>
        <taxon>Rhabditomorpha</taxon>
        <taxon>Rhabditoidea</taxon>
        <taxon>Rhabditidae</taxon>
        <taxon>Peloderinae</taxon>
        <taxon>Caenorhabditis</taxon>
    </lineage>
</organism>
<sequence>MPFSVTKFSLIFVALLLAEALVAQSSQLESVTRKPKPFFLVKKSMLVGMSETTEEVCQTVVLHNYEPVYGHLINGSLVEILQASGHKFSKTHVQCLEEDRPSCHGVKDDMYISECVTVYENANTMVRLFNSFGPYRLGTIRIPILCECRLRRQYRDFERPGDDDDDV</sequence>
<name>YT42_CAEEL</name>
<accession>Q11070</accession>
<keyword id="KW-1185">Reference proteome</keyword>
<keyword id="KW-0732">Signal</keyword>